<feature type="chain" id="PRO_0000241743" description="Ubiquinone biosynthesis O-methyltransferase">
    <location>
        <begin position="1"/>
        <end position="234"/>
    </location>
</feature>
<feature type="binding site" evidence="1">
    <location>
        <position position="39"/>
    </location>
    <ligand>
        <name>S-adenosyl-L-methionine</name>
        <dbReference type="ChEBI" id="CHEBI:59789"/>
    </ligand>
</feature>
<feature type="binding site" evidence="1">
    <location>
        <position position="59"/>
    </location>
    <ligand>
        <name>S-adenosyl-L-methionine</name>
        <dbReference type="ChEBI" id="CHEBI:59789"/>
    </ligand>
</feature>
<feature type="binding site" evidence="1">
    <location>
        <position position="80"/>
    </location>
    <ligand>
        <name>S-adenosyl-L-methionine</name>
        <dbReference type="ChEBI" id="CHEBI:59789"/>
    </ligand>
</feature>
<feature type="binding site" evidence="1">
    <location>
        <position position="124"/>
    </location>
    <ligand>
        <name>S-adenosyl-L-methionine</name>
        <dbReference type="ChEBI" id="CHEBI:59789"/>
    </ligand>
</feature>
<reference key="1">
    <citation type="journal article" date="2005" name="Proc. Natl. Acad. Sci. U.S.A.">
        <title>Complete genome sequence of Vibrio fischeri: a symbiotic bacterium with pathogenic congeners.</title>
        <authorList>
            <person name="Ruby E.G."/>
            <person name="Urbanowski M."/>
            <person name="Campbell J."/>
            <person name="Dunn A."/>
            <person name="Faini M."/>
            <person name="Gunsalus R."/>
            <person name="Lostroh P."/>
            <person name="Lupp C."/>
            <person name="McCann J."/>
            <person name="Millikan D."/>
            <person name="Schaefer A."/>
            <person name="Stabb E."/>
            <person name="Stevens A."/>
            <person name="Visick K."/>
            <person name="Whistler C."/>
            <person name="Greenberg E.P."/>
        </authorList>
    </citation>
    <scope>NUCLEOTIDE SEQUENCE [LARGE SCALE GENOMIC DNA]</scope>
    <source>
        <strain>ATCC 700601 / ES114</strain>
    </source>
</reference>
<evidence type="ECO:0000255" key="1">
    <source>
        <dbReference type="HAMAP-Rule" id="MF_00472"/>
    </source>
</evidence>
<protein>
    <recommendedName>
        <fullName evidence="1">Ubiquinone biosynthesis O-methyltransferase</fullName>
    </recommendedName>
    <alternativeName>
        <fullName evidence="1">2-polyprenyl-6-hydroxyphenol methylase</fullName>
        <ecNumber evidence="1">2.1.1.222</ecNumber>
    </alternativeName>
    <alternativeName>
        <fullName evidence="1">3-demethylubiquinone 3-O-methyltransferase</fullName>
        <ecNumber evidence="1">2.1.1.64</ecNumber>
    </alternativeName>
</protein>
<gene>
    <name evidence="1" type="primary">ubiG</name>
    <name type="ordered locus">VF_1203</name>
</gene>
<accession>Q5E5J8</accession>
<keyword id="KW-0489">Methyltransferase</keyword>
<keyword id="KW-1185">Reference proteome</keyword>
<keyword id="KW-0949">S-adenosyl-L-methionine</keyword>
<keyword id="KW-0808">Transferase</keyword>
<keyword id="KW-0831">Ubiquinone biosynthesis</keyword>
<organism>
    <name type="scientific">Aliivibrio fischeri (strain ATCC 700601 / ES114)</name>
    <name type="common">Vibrio fischeri</name>
    <dbReference type="NCBI Taxonomy" id="312309"/>
    <lineage>
        <taxon>Bacteria</taxon>
        <taxon>Pseudomonadati</taxon>
        <taxon>Pseudomonadota</taxon>
        <taxon>Gammaproteobacteria</taxon>
        <taxon>Vibrionales</taxon>
        <taxon>Vibrionaceae</taxon>
        <taxon>Aliivibrio</taxon>
    </lineage>
</organism>
<name>UBIG_ALIF1</name>
<sequence length="234" mass="26116">MTQQLNVDPAEIKKFEDMASRWWDLEGEFKPLHQINPLRLNYVLENANGLFGKKVLDVGCGGGILAESMAKQGADVIGLDMGKEPLTVARLHALETGTKLEYVQSTAEQHAEENPETYDVVTCMEMLEHVPDPLSVIRSCAKMVKPGGHVFFSTLNRNIKSYLFAIVGAEQLLKLVPKGTHDHNKFIRPSELLKMLDQTALQERGITGLHYNPLTDTYSLGKNVDVNYIVHTTL</sequence>
<dbReference type="EC" id="2.1.1.222" evidence="1"/>
<dbReference type="EC" id="2.1.1.64" evidence="1"/>
<dbReference type="EMBL" id="CP000020">
    <property type="protein sequence ID" value="AAW85698.1"/>
    <property type="molecule type" value="Genomic_DNA"/>
</dbReference>
<dbReference type="RefSeq" id="WP_011261822.1">
    <property type="nucleotide sequence ID" value="NC_006840.2"/>
</dbReference>
<dbReference type="RefSeq" id="YP_204586.1">
    <property type="nucleotide sequence ID" value="NC_006840.2"/>
</dbReference>
<dbReference type="SMR" id="Q5E5J8"/>
<dbReference type="STRING" id="312309.VF_1203"/>
<dbReference type="EnsemblBacteria" id="AAW85698">
    <property type="protein sequence ID" value="AAW85698"/>
    <property type="gene ID" value="VF_1203"/>
</dbReference>
<dbReference type="GeneID" id="54163874"/>
<dbReference type="KEGG" id="vfi:VF_1203"/>
<dbReference type="PATRIC" id="fig|312309.11.peg.1210"/>
<dbReference type="eggNOG" id="COG2227">
    <property type="taxonomic scope" value="Bacteria"/>
</dbReference>
<dbReference type="HOGENOM" id="CLU_042432_5_0_6"/>
<dbReference type="OrthoDB" id="9801538at2"/>
<dbReference type="UniPathway" id="UPA00232"/>
<dbReference type="Proteomes" id="UP000000537">
    <property type="component" value="Chromosome I"/>
</dbReference>
<dbReference type="GO" id="GO:0102208">
    <property type="term" value="F:2-polyprenyl-6-hydroxyphenol methylase activity"/>
    <property type="evidence" value="ECO:0007669"/>
    <property type="project" value="UniProtKB-EC"/>
</dbReference>
<dbReference type="GO" id="GO:0061542">
    <property type="term" value="F:3-demethylubiquinol 3-O-methyltransferase activity"/>
    <property type="evidence" value="ECO:0007669"/>
    <property type="project" value="UniProtKB-UniRule"/>
</dbReference>
<dbReference type="GO" id="GO:0010420">
    <property type="term" value="F:polyprenyldihydroxybenzoate methyltransferase activity"/>
    <property type="evidence" value="ECO:0007669"/>
    <property type="project" value="InterPro"/>
</dbReference>
<dbReference type="GO" id="GO:0032259">
    <property type="term" value="P:methylation"/>
    <property type="evidence" value="ECO:0007669"/>
    <property type="project" value="UniProtKB-KW"/>
</dbReference>
<dbReference type="CDD" id="cd02440">
    <property type="entry name" value="AdoMet_MTases"/>
    <property type="match status" value="1"/>
</dbReference>
<dbReference type="FunFam" id="3.40.50.150:FF:000028">
    <property type="entry name" value="Ubiquinone biosynthesis O-methyltransferase"/>
    <property type="match status" value="1"/>
</dbReference>
<dbReference type="Gene3D" id="3.40.50.150">
    <property type="entry name" value="Vaccinia Virus protein VP39"/>
    <property type="match status" value="1"/>
</dbReference>
<dbReference type="HAMAP" id="MF_00472">
    <property type="entry name" value="UbiG"/>
    <property type="match status" value="1"/>
</dbReference>
<dbReference type="InterPro" id="IPR029063">
    <property type="entry name" value="SAM-dependent_MTases_sf"/>
</dbReference>
<dbReference type="InterPro" id="IPR010233">
    <property type="entry name" value="UbiG_MeTrfase"/>
</dbReference>
<dbReference type="NCBIfam" id="TIGR01983">
    <property type="entry name" value="UbiG"/>
    <property type="match status" value="1"/>
</dbReference>
<dbReference type="PANTHER" id="PTHR43464">
    <property type="entry name" value="METHYLTRANSFERASE"/>
    <property type="match status" value="1"/>
</dbReference>
<dbReference type="PANTHER" id="PTHR43464:SF19">
    <property type="entry name" value="UBIQUINONE BIOSYNTHESIS O-METHYLTRANSFERASE, MITOCHONDRIAL"/>
    <property type="match status" value="1"/>
</dbReference>
<dbReference type="Pfam" id="PF13489">
    <property type="entry name" value="Methyltransf_23"/>
    <property type="match status" value="1"/>
</dbReference>
<dbReference type="SUPFAM" id="SSF53335">
    <property type="entry name" value="S-adenosyl-L-methionine-dependent methyltransferases"/>
    <property type="match status" value="1"/>
</dbReference>
<comment type="function">
    <text evidence="1">O-methyltransferase that catalyzes the 2 O-methylation steps in the ubiquinone biosynthetic pathway.</text>
</comment>
<comment type="catalytic activity">
    <reaction evidence="1">
        <text>a 3-demethylubiquinol + S-adenosyl-L-methionine = a ubiquinol + S-adenosyl-L-homocysteine + H(+)</text>
        <dbReference type="Rhea" id="RHEA:44380"/>
        <dbReference type="Rhea" id="RHEA-COMP:9566"/>
        <dbReference type="Rhea" id="RHEA-COMP:10914"/>
        <dbReference type="ChEBI" id="CHEBI:15378"/>
        <dbReference type="ChEBI" id="CHEBI:17976"/>
        <dbReference type="ChEBI" id="CHEBI:57856"/>
        <dbReference type="ChEBI" id="CHEBI:59789"/>
        <dbReference type="ChEBI" id="CHEBI:84422"/>
        <dbReference type="EC" id="2.1.1.64"/>
    </reaction>
</comment>
<comment type="catalytic activity">
    <reaction evidence="1">
        <text>a 3-(all-trans-polyprenyl)benzene-1,2-diol + S-adenosyl-L-methionine = a 2-methoxy-6-(all-trans-polyprenyl)phenol + S-adenosyl-L-homocysteine + H(+)</text>
        <dbReference type="Rhea" id="RHEA:31411"/>
        <dbReference type="Rhea" id="RHEA-COMP:9550"/>
        <dbReference type="Rhea" id="RHEA-COMP:9551"/>
        <dbReference type="ChEBI" id="CHEBI:15378"/>
        <dbReference type="ChEBI" id="CHEBI:57856"/>
        <dbReference type="ChEBI" id="CHEBI:59789"/>
        <dbReference type="ChEBI" id="CHEBI:62729"/>
        <dbReference type="ChEBI" id="CHEBI:62731"/>
        <dbReference type="EC" id="2.1.1.222"/>
    </reaction>
</comment>
<comment type="pathway">
    <text evidence="1">Cofactor biosynthesis; ubiquinone biosynthesis.</text>
</comment>
<comment type="similarity">
    <text evidence="1">Belongs to the methyltransferase superfamily. UbiG/COQ3 family.</text>
</comment>
<proteinExistence type="inferred from homology"/>